<feature type="chain" id="PRO_0000441748" description="Smu-1 suppressor of mec-8 and unc-52 protein">
    <location>
        <begin position="1"/>
        <end position="510"/>
    </location>
</feature>
<feature type="domain" description="LisH" evidence="4">
    <location>
        <begin position="7"/>
        <end position="39"/>
    </location>
</feature>
<feature type="domain" description="CTLH" evidence="3">
    <location>
        <begin position="41"/>
        <end position="93"/>
    </location>
</feature>
<feature type="repeat" description="WD 1" evidence="5">
    <location>
        <begin position="212"/>
        <end position="251"/>
    </location>
</feature>
<feature type="repeat" description="WD 2" evidence="5">
    <location>
        <begin position="260"/>
        <end position="301"/>
    </location>
</feature>
<feature type="repeat" description="WD 3" evidence="5">
    <location>
        <begin position="303"/>
        <end position="344"/>
    </location>
</feature>
<feature type="repeat" description="WD 4" evidence="5">
    <location>
        <begin position="345"/>
        <end position="379"/>
    </location>
</feature>
<feature type="repeat" description="WD 5" evidence="2">
    <location>
        <begin position="380"/>
        <end position="423"/>
    </location>
</feature>
<feature type="repeat" description="WD 6" evidence="2">
    <location>
        <begin position="425"/>
        <end position="467"/>
    </location>
</feature>
<feature type="repeat" description="WD 7" evidence="2">
    <location>
        <begin position="470"/>
        <end position="509"/>
    </location>
</feature>
<feature type="region of interest" description="Required and sufficient for interaction with smu-2" evidence="8">
    <location>
        <begin position="1"/>
        <end position="181"/>
    </location>
</feature>
<feature type="mutagenesis site" description="Mildly reduces homodimerization." evidence="8">
    <original>I</original>
    <variation>A</variation>
    <location>
        <position position="15"/>
    </location>
</feature>
<feature type="mutagenesis site" description="Disrupts homodimerization." evidence="8">
    <original>I</original>
    <variation>R</variation>
    <location>
        <position position="15"/>
    </location>
</feature>
<feature type="mutagenesis site" description="Disrupts homodimerization." evidence="8">
    <original>F</original>
    <variation>S</variation>
    <variation>R</variation>
    <location>
        <position position="18"/>
    </location>
</feature>
<feature type="mutagenesis site" description="Disrupts interaction with smu-2." evidence="8">
    <original>L</original>
    <variation>R</variation>
    <location>
        <position position="96"/>
    </location>
</feature>
<feature type="mutagenesis site" description="In mn415; enhances accumulation of an alternatively spliced isoform of unc-52 that skips exon 17. Selective suppressor of unc-52 missense mutations in exon 17." evidence="6">
    <location>
        <begin position="255"/>
        <end position="510"/>
    </location>
</feature>
<feature type="helix" evidence="19">
    <location>
        <begin position="10"/>
        <end position="21"/>
    </location>
</feature>
<feature type="helix" evidence="19">
    <location>
        <begin position="25"/>
        <end position="35"/>
    </location>
</feature>
<feature type="helix" evidence="19">
    <location>
        <begin position="45"/>
        <end position="54"/>
    </location>
</feature>
<feature type="helix" evidence="19">
    <location>
        <begin position="57"/>
        <end position="66"/>
    </location>
</feature>
<feature type="helix" evidence="19">
    <location>
        <begin position="71"/>
        <end position="87"/>
    </location>
</feature>
<feature type="helix" evidence="19">
    <location>
        <begin position="91"/>
        <end position="100"/>
    </location>
</feature>
<feature type="helix" evidence="19">
    <location>
        <begin position="102"/>
        <end position="110"/>
    </location>
</feature>
<feature type="helix" evidence="19">
    <location>
        <begin position="112"/>
        <end position="123"/>
    </location>
</feature>
<feature type="strand" evidence="19">
    <location>
        <begin position="124"/>
        <end position="126"/>
    </location>
</feature>
<feature type="helix" evidence="19">
    <location>
        <begin position="129"/>
        <end position="132"/>
    </location>
</feature>
<feature type="strand" evidence="19">
    <location>
        <begin position="133"/>
        <end position="136"/>
    </location>
</feature>
<feature type="helix" evidence="19">
    <location>
        <begin position="138"/>
        <end position="150"/>
    </location>
</feature>
<feature type="helix" evidence="19">
    <location>
        <begin position="160"/>
        <end position="176"/>
    </location>
</feature>
<gene>
    <name evidence="9 15" type="primary">smu-1</name>
    <name evidence="15" type="ORF">CC4.3</name>
</gene>
<comment type="function">
    <text evidence="1 6 7">Involved in pre-mRNA splicing as a component of the spliceosome (By similarity). Selectively regulates alternative splicing of unc-52 exon 17 (PubMed:11438655, PubMed:15254247). Thus, smu-1 mutants selectively suppress the effects of unc-52 nonsense mutations in exon 17 by promoting the accumulation of unc-52 isoforms that lack exon 17 and enhance the effects of unc-52 mutations that affect the exon 16 splice donor site (PubMed:11438655, PubMed:15254247). In contrast, smu-1 mutants do not suppress unc-52 nonsense mutations in exon 18 (PubMed:11438655).</text>
</comment>
<comment type="subunit">
    <text evidence="1 7 8">Component of the spliceosome B complex (By similarity). Homodimer (via LisH domain) (PubMed:27150041). The homodimer interacts (via the N-terminal region including the LisH and CTLH domains) with smu-2, giving rise to a heterotetramer (PubMed:15254247, PubMed:27150041).</text>
</comment>
<comment type="interaction">
    <interactant intactId="EBI-2411547">
        <id>G5EEG7</id>
    </interactant>
    <interactant intactId="EBI-2411547">
        <id>G5EEG7</id>
        <label>smu-1</label>
    </interactant>
    <organismsDiffer>false</organismsDiffer>
    <experiments>3</experiments>
</comment>
<comment type="interaction">
    <interactant intactId="EBI-2411547">
        <id>G5EEG7</id>
    </interactant>
    <interactant intactId="EBI-2415311">
        <id>Q9N4U5</id>
        <label>smu-2</label>
    </interactant>
    <organismsDiffer>false</organismsDiffer>
    <experiments>6</experiments>
</comment>
<comment type="subcellular location">
    <subcellularLocation>
        <location evidence="6 7">Nucleus</location>
    </subcellularLocation>
</comment>
<comment type="tissue specificity">
    <text evidence="6">Ubiquitous. Detected in the intestine and germline in adult hermaphrodites.</text>
</comment>
<comment type="developmental stage">
    <text evidence="6">Ubiquitous. Detected throughout embryonic and larval development and in adult hermaphrodites.</text>
</comment>
<comment type="domain">
    <text evidence="8">The WD repeats assemble into a seven-bladed WD propeller.</text>
</comment>
<comment type="similarity">
    <text evidence="11">Belongs to the WD repeat SMU1 family.</text>
</comment>
<evidence type="ECO:0000250" key="1">
    <source>
        <dbReference type="UniProtKB" id="Q2TAY7"/>
    </source>
</evidence>
<evidence type="ECO:0000255" key="2"/>
<evidence type="ECO:0000255" key="3">
    <source>
        <dbReference type="PROSITE-ProRule" id="PRU00058"/>
    </source>
</evidence>
<evidence type="ECO:0000255" key="4">
    <source>
        <dbReference type="PROSITE-ProRule" id="PRU00126"/>
    </source>
</evidence>
<evidence type="ECO:0000255" key="5">
    <source>
        <dbReference type="PROSITE-ProRule" id="PRU00221"/>
    </source>
</evidence>
<evidence type="ECO:0000269" key="6">
    <source>
    </source>
</evidence>
<evidence type="ECO:0000269" key="7">
    <source>
    </source>
</evidence>
<evidence type="ECO:0000269" key="8">
    <source>
    </source>
</evidence>
<evidence type="ECO:0000303" key="9">
    <source>
    </source>
</evidence>
<evidence type="ECO:0000303" key="10">
    <source>
    </source>
</evidence>
<evidence type="ECO:0000305" key="11"/>
<evidence type="ECO:0000312" key="12">
    <source>
        <dbReference type="EMBL" id="AAK00353.1"/>
    </source>
</evidence>
<evidence type="ECO:0000312" key="13">
    <source>
        <dbReference type="EMBL" id="CAB04014.1"/>
    </source>
</evidence>
<evidence type="ECO:0000312" key="14">
    <source>
        <dbReference type="Proteomes" id="UP000001940"/>
    </source>
</evidence>
<evidence type="ECO:0000312" key="15">
    <source>
        <dbReference type="WormBase" id="CC4.3"/>
    </source>
</evidence>
<evidence type="ECO:0007744" key="16">
    <source>
        <dbReference type="PDB" id="5EN6"/>
    </source>
</evidence>
<evidence type="ECO:0007744" key="17">
    <source>
        <dbReference type="PDB" id="5EN7"/>
    </source>
</evidence>
<evidence type="ECO:0007744" key="18">
    <source>
        <dbReference type="PDB" id="5EN8"/>
    </source>
</evidence>
<evidence type="ECO:0007829" key="19">
    <source>
        <dbReference type="PDB" id="5EN8"/>
    </source>
</evidence>
<sequence length="510" mass="57251">MSSIEIESSDVIRLIEQFLKESNLHRTLAILQEETNVSLNTVDSIDGFCNEITSGNWDNVLKTVQSLKLPAKKLIDLYEHVIIELVELRELATARLVARQTDPMILLKQIDPDRFARLESLINRPYFDGQEVYGDVSKEKRRSVIAQTLSSEVHVVAPSRLLSLLGQSLKWQLHQGLLPPGTAIDLFRGKAAQKEQIEERYPTMMARSIKFSTKSYPESAVFSPDANYLVSGSKDGFIEVWNYMNGKLRKDLKYQAQDNLMMMDAAVRCISFSRDSEMLATGSIDGKIKVWKVETGDCLRRFDRAHTKGVCAVRFSKDNSHILSGGNDHVVRVHGMKSGKCLKEMRGHSSYITDVRYSDEGNHIISCSTDGSIRVWHGKSGECLSTFRVGSEDYPILNVIPIPKSDPPQMIVCNRSNTLYVVNISGQVVRTMTSGKREKGDFINCILSPKGEWAYAIAEDGVMYCFMVLSGTLETTLPVTERLPIGLAHHPHQNLIASYAEDGLLKLWTD</sequence>
<proteinExistence type="evidence at protein level"/>
<accession>G5EEG7</accession>
<keyword id="KW-0002">3D-structure</keyword>
<keyword id="KW-0507">mRNA processing</keyword>
<keyword id="KW-0508">mRNA splicing</keyword>
<keyword id="KW-0539">Nucleus</keyword>
<keyword id="KW-1185">Reference proteome</keyword>
<keyword id="KW-0677">Repeat</keyword>
<keyword id="KW-0747">Spliceosome</keyword>
<keyword id="KW-0853">WD repeat</keyword>
<name>SMU1_CAEEL</name>
<dbReference type="EMBL" id="AF330595">
    <property type="protein sequence ID" value="AAK00353.1"/>
    <property type="molecule type" value="mRNA"/>
</dbReference>
<dbReference type="EMBL" id="BX284601">
    <property type="protein sequence ID" value="CAB04014.1"/>
    <property type="molecule type" value="Genomic_DNA"/>
</dbReference>
<dbReference type="PIR" id="T20276">
    <property type="entry name" value="T20276"/>
</dbReference>
<dbReference type="RefSeq" id="NP_493279.1">
    <property type="nucleotide sequence ID" value="NM_060878.6"/>
</dbReference>
<dbReference type="PDB" id="5EN6">
    <property type="method" value="X-ray"/>
    <property type="resolution" value="3.10 A"/>
    <property type="chains" value="A/B=2-181"/>
</dbReference>
<dbReference type="PDB" id="5EN7">
    <property type="method" value="X-ray"/>
    <property type="resolution" value="2.94 A"/>
    <property type="chains" value="A/C/E/G=2-181"/>
</dbReference>
<dbReference type="PDB" id="5EN8">
    <property type="method" value="X-ray"/>
    <property type="resolution" value="2.23 A"/>
    <property type="chains" value="A/B=2-181"/>
</dbReference>
<dbReference type="PDBsum" id="5EN6"/>
<dbReference type="PDBsum" id="5EN7"/>
<dbReference type="PDBsum" id="5EN8"/>
<dbReference type="SMR" id="G5EEG7"/>
<dbReference type="DIP" id="DIP-61923N"/>
<dbReference type="FunCoup" id="G5EEG7">
    <property type="interactions" value="3445"/>
</dbReference>
<dbReference type="IntAct" id="G5EEG7">
    <property type="interactions" value="2"/>
</dbReference>
<dbReference type="STRING" id="6239.CC4.3.2"/>
<dbReference type="PaxDb" id="6239-CC4.3.1"/>
<dbReference type="PeptideAtlas" id="G5EEG7"/>
<dbReference type="EnsemblMetazoa" id="CC4.3.1">
    <property type="protein sequence ID" value="CC4.3.1"/>
    <property type="gene ID" value="WBGene00004895"/>
</dbReference>
<dbReference type="EnsemblMetazoa" id="CC4.3.2">
    <property type="protein sequence ID" value="CC4.3.2"/>
    <property type="gene ID" value="WBGene00004895"/>
</dbReference>
<dbReference type="GeneID" id="173175"/>
<dbReference type="KEGG" id="cel:CELE_CC4.3"/>
<dbReference type="AGR" id="WB:WBGene00004895"/>
<dbReference type="CTD" id="173175"/>
<dbReference type="WormBase" id="CC4.3">
    <property type="protein sequence ID" value="CE15742"/>
    <property type="gene ID" value="WBGene00004895"/>
    <property type="gene designation" value="smu-1"/>
</dbReference>
<dbReference type="eggNOG" id="KOG0275">
    <property type="taxonomic scope" value="Eukaryota"/>
</dbReference>
<dbReference type="GeneTree" id="ENSGT00940000155007"/>
<dbReference type="HOGENOM" id="CLU_000288_57_38_1"/>
<dbReference type="InParanoid" id="G5EEG7"/>
<dbReference type="OMA" id="MMKQQEP"/>
<dbReference type="OrthoDB" id="538223at2759"/>
<dbReference type="PhylomeDB" id="G5EEG7"/>
<dbReference type="EvolutionaryTrace" id="G5EEG7"/>
<dbReference type="PRO" id="PR:G5EEG7"/>
<dbReference type="Proteomes" id="UP000001940">
    <property type="component" value="Chromosome I"/>
</dbReference>
<dbReference type="Bgee" id="WBGene00004895">
    <property type="expression patterns" value="Expressed in germ line (C elegans) and 4 other cell types or tissues"/>
</dbReference>
<dbReference type="GO" id="GO:0005634">
    <property type="term" value="C:nucleus"/>
    <property type="evidence" value="ECO:0000314"/>
    <property type="project" value="WormBase"/>
</dbReference>
<dbReference type="GO" id="GO:0071011">
    <property type="term" value="C:precatalytic spliceosome"/>
    <property type="evidence" value="ECO:0000318"/>
    <property type="project" value="GO_Central"/>
</dbReference>
<dbReference type="GO" id="GO:0071005">
    <property type="term" value="C:U2-type precatalytic spliceosome"/>
    <property type="evidence" value="ECO:0000250"/>
    <property type="project" value="UniProtKB"/>
</dbReference>
<dbReference type="GO" id="GO:0042802">
    <property type="term" value="F:identical protein binding"/>
    <property type="evidence" value="ECO:0000353"/>
    <property type="project" value="IntAct"/>
</dbReference>
<dbReference type="GO" id="GO:0042803">
    <property type="term" value="F:protein homodimerization activity"/>
    <property type="evidence" value="ECO:0000353"/>
    <property type="project" value="UniProtKB"/>
</dbReference>
<dbReference type="GO" id="GO:0009792">
    <property type="term" value="P:embryo development ending in birth or egg hatching"/>
    <property type="evidence" value="ECO:0000316"/>
    <property type="project" value="WormBase"/>
</dbReference>
<dbReference type="GO" id="GO:0040011">
    <property type="term" value="P:locomotion"/>
    <property type="evidence" value="ECO:0000316"/>
    <property type="project" value="WormBase"/>
</dbReference>
<dbReference type="GO" id="GO:0007638">
    <property type="term" value="P:mechanosensory behavior"/>
    <property type="evidence" value="ECO:0000316"/>
    <property type="project" value="WormBase"/>
</dbReference>
<dbReference type="GO" id="GO:0000398">
    <property type="term" value="P:mRNA splicing, via spliceosome"/>
    <property type="evidence" value="ECO:0000250"/>
    <property type="project" value="UniProtKB"/>
</dbReference>
<dbReference type="GO" id="GO:0048644">
    <property type="term" value="P:muscle organ morphogenesis"/>
    <property type="evidence" value="ECO:0000316"/>
    <property type="project" value="WormBase"/>
</dbReference>
<dbReference type="GO" id="GO:0002119">
    <property type="term" value="P:nematode larval development"/>
    <property type="evidence" value="ECO:0000316"/>
    <property type="project" value="WormBase"/>
</dbReference>
<dbReference type="GO" id="GO:0048666">
    <property type="term" value="P:neuron development"/>
    <property type="evidence" value="ECO:0000316"/>
    <property type="project" value="WormBase"/>
</dbReference>
<dbReference type="GO" id="GO:0000381">
    <property type="term" value="P:regulation of alternative mRNA splicing, via spliceosome"/>
    <property type="evidence" value="ECO:0000315"/>
    <property type="project" value="WormBase"/>
</dbReference>
<dbReference type="GO" id="GO:0008380">
    <property type="term" value="P:RNA splicing"/>
    <property type="evidence" value="ECO:0000318"/>
    <property type="project" value="GO_Central"/>
</dbReference>
<dbReference type="CDD" id="cd00200">
    <property type="entry name" value="WD40"/>
    <property type="match status" value="1"/>
</dbReference>
<dbReference type="FunFam" id="2.130.10.10:FF:001224">
    <property type="entry name" value="Protein CBR-SMU-1"/>
    <property type="match status" value="1"/>
</dbReference>
<dbReference type="Gene3D" id="2.130.10.10">
    <property type="entry name" value="YVTN repeat-like/Quinoprotein amine dehydrogenase"/>
    <property type="match status" value="1"/>
</dbReference>
<dbReference type="InterPro" id="IPR006595">
    <property type="entry name" value="CTLH_C"/>
</dbReference>
<dbReference type="InterPro" id="IPR020472">
    <property type="entry name" value="G-protein_beta_WD-40_rep"/>
</dbReference>
<dbReference type="InterPro" id="IPR006594">
    <property type="entry name" value="LisH"/>
</dbReference>
<dbReference type="InterPro" id="IPR045184">
    <property type="entry name" value="SMU1"/>
</dbReference>
<dbReference type="InterPro" id="IPR054532">
    <property type="entry name" value="TPL_SMU1_LisH-like"/>
</dbReference>
<dbReference type="InterPro" id="IPR015943">
    <property type="entry name" value="WD40/YVTN_repeat-like_dom_sf"/>
</dbReference>
<dbReference type="InterPro" id="IPR036322">
    <property type="entry name" value="WD40_repeat_dom_sf"/>
</dbReference>
<dbReference type="InterPro" id="IPR001680">
    <property type="entry name" value="WD40_rpt"/>
</dbReference>
<dbReference type="PANTHER" id="PTHR22848">
    <property type="entry name" value="WD40 REPEAT PROTEIN"/>
    <property type="match status" value="1"/>
</dbReference>
<dbReference type="Pfam" id="PF23410">
    <property type="entry name" value="Beta-prop_VPS8"/>
    <property type="match status" value="1"/>
</dbReference>
<dbReference type="Pfam" id="PF17814">
    <property type="entry name" value="LisH_TPL"/>
    <property type="match status" value="1"/>
</dbReference>
<dbReference type="Pfam" id="PF00400">
    <property type="entry name" value="WD40"/>
    <property type="match status" value="2"/>
</dbReference>
<dbReference type="PRINTS" id="PR00320">
    <property type="entry name" value="GPROTEINBRPT"/>
</dbReference>
<dbReference type="SMART" id="SM00668">
    <property type="entry name" value="CTLH"/>
    <property type="match status" value="1"/>
</dbReference>
<dbReference type="SMART" id="SM00667">
    <property type="entry name" value="LisH"/>
    <property type="match status" value="1"/>
</dbReference>
<dbReference type="SMART" id="SM00320">
    <property type="entry name" value="WD40"/>
    <property type="match status" value="7"/>
</dbReference>
<dbReference type="SUPFAM" id="SSF50978">
    <property type="entry name" value="WD40 repeat-like"/>
    <property type="match status" value="1"/>
</dbReference>
<dbReference type="PROSITE" id="PS50897">
    <property type="entry name" value="CTLH"/>
    <property type="match status" value="1"/>
</dbReference>
<dbReference type="PROSITE" id="PS50896">
    <property type="entry name" value="LISH"/>
    <property type="match status" value="1"/>
</dbReference>
<dbReference type="PROSITE" id="PS50082">
    <property type="entry name" value="WD_REPEATS_2"/>
    <property type="match status" value="4"/>
</dbReference>
<dbReference type="PROSITE" id="PS50294">
    <property type="entry name" value="WD_REPEATS_REGION"/>
    <property type="match status" value="1"/>
</dbReference>
<organism evidence="12">
    <name type="scientific">Caenorhabditis elegans</name>
    <dbReference type="NCBI Taxonomy" id="6239"/>
    <lineage>
        <taxon>Eukaryota</taxon>
        <taxon>Metazoa</taxon>
        <taxon>Ecdysozoa</taxon>
        <taxon>Nematoda</taxon>
        <taxon>Chromadorea</taxon>
        <taxon>Rhabditida</taxon>
        <taxon>Rhabditina</taxon>
        <taxon>Rhabditomorpha</taxon>
        <taxon>Rhabditoidea</taxon>
        <taxon>Rhabditidae</taxon>
        <taxon>Peloderinae</taxon>
        <taxon>Caenorhabditis</taxon>
    </lineage>
</organism>
<protein>
    <recommendedName>
        <fullName evidence="11">Smu-1 suppressor of mec-8 and unc-52 protein</fullName>
        <shortName evidence="10">Smu1</shortName>
    </recommendedName>
    <alternativeName>
        <fullName evidence="11">Suppressor of Mec and Unc defects 1</fullName>
    </alternativeName>
</protein>
<reference evidence="12" key="1">
    <citation type="journal article" date="2001" name="Mol. Cell. Biol.">
        <title>Analysis of smu-1, a gene that regulates the alternative splicing of unc-52 pre-mRNA in Caenorhabditis elegans.</title>
        <authorList>
            <person name="Spike C.A."/>
            <person name="Shaw J.E."/>
            <person name="Herman R.K."/>
        </authorList>
    </citation>
    <scope>NUCLEOTIDE SEQUENCE [MRNA]</scope>
    <scope>FUNCTION</scope>
    <scope>SUBCELLULAR LOCATION</scope>
    <scope>DEVELOPMENTAL STAGE</scope>
    <scope>TISSUE SPECIFICITY</scope>
    <scope>MUTAGENESIS OF 255-GLN--ASP-510</scope>
    <source>
        <strain evidence="12">Bristol N2</strain>
    </source>
</reference>
<reference evidence="13 14" key="2">
    <citation type="journal article" date="1998" name="Science">
        <title>Genome sequence of the nematode C. elegans: a platform for investigating biology.</title>
        <authorList>
            <consortium name="The C. elegans sequencing consortium"/>
        </authorList>
    </citation>
    <scope>NUCLEOTIDE SEQUENCE [LARGE SCALE GENOMIC DNA]</scope>
    <source>
        <strain evidence="13 14">Bristol N2</strain>
    </source>
</reference>
<reference key="3">
    <citation type="journal article" date="2004" name="Mol. Cell. Biol.">
        <title>SMU-2 and SMU-1, Caenorhabditis elegans homologs of mammalian spliceosome-associated proteins RED and fSAP57, work together to affect splice site choice.</title>
        <authorList>
            <person name="Spartz A.K."/>
            <person name="Herman R.K."/>
            <person name="Shaw J.E."/>
        </authorList>
    </citation>
    <scope>FUNCTION</scope>
    <scope>SUBCELLULAR LOCATION</scope>
    <scope>INTERACTION WITH SMU-2</scope>
</reference>
<reference evidence="16 17 18" key="4">
    <citation type="journal article" date="2016" name="Structure">
        <title>Structural Basis for the Functional Coupling of the Alternative Splicing Factors Smu1 and RED.</title>
        <authorList>
            <person name="Ulrich A.K."/>
            <person name="Schulz J.F."/>
            <person name="Kamprad A."/>
            <person name="Schuetze T."/>
            <person name="Wahl M.C."/>
        </authorList>
    </citation>
    <scope>X-RAY CRYSTALLOGRAPHY (2.23 ANGSTROMS) OF 2-181 IN COMPLEX WITH SMU-2</scope>
    <scope>INTERACTION WITH SMU-2</scope>
    <scope>SUBUNIT</scope>
    <scope>DOMAIN</scope>
    <scope>MUTAGENESIS OF ILE-15; PHE-18 AND LEU-96</scope>
</reference>